<dbReference type="EMBL" id="BK001761">
    <property type="protein sequence ID" value="DAA02289.1"/>
    <property type="molecule type" value="mRNA"/>
</dbReference>
<dbReference type="EMBL" id="AB025604">
    <property type="status" value="NOT_ANNOTATED_CDS"/>
    <property type="molecule type" value="Genomic_DNA"/>
</dbReference>
<dbReference type="EMBL" id="CP002688">
    <property type="protein sequence ID" value="AED97199.1"/>
    <property type="molecule type" value="Genomic_DNA"/>
</dbReference>
<dbReference type="EMBL" id="BT024678">
    <property type="protein sequence ID" value="ABD57503.1"/>
    <property type="molecule type" value="mRNA"/>
</dbReference>
<dbReference type="EMBL" id="AY085568">
    <property type="protein sequence ID" value="AAM62790.1"/>
    <property type="molecule type" value="mRNA"/>
</dbReference>
<dbReference type="RefSeq" id="NP_200759.2">
    <property type="nucleotide sequence ID" value="NM_125343.3"/>
</dbReference>
<dbReference type="PaxDb" id="3702-AT5G59510.1"/>
<dbReference type="EnsemblPlants" id="AT5G59510.1">
    <property type="protein sequence ID" value="AT5G59510.1"/>
    <property type="gene ID" value="AT5G59510"/>
</dbReference>
<dbReference type="GeneID" id="836070"/>
<dbReference type="Gramene" id="AT5G59510.1">
    <property type="protein sequence ID" value="AT5G59510.1"/>
    <property type="gene ID" value="AT5G59510"/>
</dbReference>
<dbReference type="KEGG" id="ath:AT5G59510"/>
<dbReference type="Araport" id="AT5G59510"/>
<dbReference type="TAIR" id="AT5G59510">
    <property type="gene designation" value="RTFL5"/>
</dbReference>
<dbReference type="HOGENOM" id="CLU_150897_0_0_1"/>
<dbReference type="InParanoid" id="Q8LE84"/>
<dbReference type="OMA" id="CRNMAKE"/>
<dbReference type="OrthoDB" id="1613769at2759"/>
<dbReference type="PhylomeDB" id="Q8LE84"/>
<dbReference type="PRO" id="PR:Q8LE84"/>
<dbReference type="Proteomes" id="UP000006548">
    <property type="component" value="Chromosome 5"/>
</dbReference>
<dbReference type="ExpressionAtlas" id="Q8LE84">
    <property type="expression patterns" value="baseline and differential"/>
</dbReference>
<dbReference type="GO" id="GO:0005886">
    <property type="term" value="C:plasma membrane"/>
    <property type="evidence" value="ECO:0000250"/>
    <property type="project" value="UniProtKB"/>
</dbReference>
<dbReference type="GO" id="GO:0008285">
    <property type="term" value="P:negative regulation of cell population proliferation"/>
    <property type="evidence" value="ECO:0000250"/>
    <property type="project" value="UniProtKB"/>
</dbReference>
<dbReference type="GO" id="GO:0048367">
    <property type="term" value="P:shoot system development"/>
    <property type="evidence" value="ECO:0000250"/>
    <property type="project" value="TAIR"/>
</dbReference>
<dbReference type="InterPro" id="IPR012552">
    <property type="entry name" value="DVL"/>
</dbReference>
<dbReference type="InterPro" id="IPR052692">
    <property type="entry name" value="DVL_RTFL_polypeptides"/>
</dbReference>
<dbReference type="PANTHER" id="PTHR47596">
    <property type="entry name" value="DVL13"/>
    <property type="match status" value="1"/>
</dbReference>
<dbReference type="PANTHER" id="PTHR47596:SF9">
    <property type="entry name" value="SMALL POLYPEPTIDE DEVIL 15-RELATED"/>
    <property type="match status" value="1"/>
</dbReference>
<dbReference type="Pfam" id="PF08137">
    <property type="entry name" value="DVL"/>
    <property type="match status" value="1"/>
</dbReference>
<protein>
    <recommendedName>
        <fullName evidence="5">Small polypeptide DEVIL 18</fullName>
    </recommendedName>
    <alternativeName>
        <fullName evidence="6">Small polypeptide ROTUNDIFOLIA LIKE 5</fullName>
        <shortName evidence="6">Small polypeptide ROT-FOUR-LIKE 5</shortName>
    </alternativeName>
</protein>
<proteinExistence type="evidence at transcript level"/>
<accession>Q8LE84</accession>
<name>DVL18_ARATH</name>
<sequence length="144" mass="16235">MDDENLWKVVKKDSIFETTHFSSKPVFTRSFSTKTSSSSSKPVFTRSFSTKPTSYSSSEPIFRRSFSAKPTSSKSPFLSRSGSTKCPVDTSSTSKCSISRSLSQKGASVTRKCRNMAKEHKSRFYIMKRCVLMLVCWHKHACDS</sequence>
<reference key="1">
    <citation type="journal article" date="2004" name="Plant J.">
        <title>DVL, a novel class of small polypeptides: overexpression alters Arabidopsis development.</title>
        <authorList>
            <person name="Wen J."/>
            <person name="Lease K.A."/>
            <person name="Walker J.C."/>
        </authorList>
    </citation>
    <scope>NUCLEOTIDE SEQUENCE [MRNA]</scope>
    <scope>GENE FAMILY</scope>
    <scope>NOMENCLATURE</scope>
    <source>
        <strain>cv. Columbia</strain>
    </source>
</reference>
<reference key="2">
    <citation type="submission" date="1999-04" db="EMBL/GenBank/DDBJ databases">
        <title>Structural analysis of Arabidopsis thaliana chromosome 5. XI.</title>
        <authorList>
            <person name="Kaneko T."/>
            <person name="Katoh T."/>
            <person name="Asamizu E."/>
            <person name="Sato S."/>
            <person name="Nakamura Y."/>
            <person name="Kotani H."/>
            <person name="Tabata S."/>
        </authorList>
    </citation>
    <scope>NUCLEOTIDE SEQUENCE [LARGE SCALE GENOMIC DNA]</scope>
    <source>
        <strain>cv. Columbia</strain>
    </source>
</reference>
<reference key="3">
    <citation type="journal article" date="2017" name="Plant J.">
        <title>Araport11: a complete reannotation of the Arabidopsis thaliana reference genome.</title>
        <authorList>
            <person name="Cheng C.Y."/>
            <person name="Krishnakumar V."/>
            <person name="Chan A.P."/>
            <person name="Thibaud-Nissen F."/>
            <person name="Schobel S."/>
            <person name="Town C.D."/>
        </authorList>
    </citation>
    <scope>GENOME REANNOTATION</scope>
    <source>
        <strain>cv. Columbia</strain>
    </source>
</reference>
<reference key="4">
    <citation type="submission" date="2006-02" db="EMBL/GenBank/DDBJ databases">
        <title>Arabidopsis ORF clones.</title>
        <authorList>
            <person name="Kim C.J."/>
            <person name="Chen H."/>
            <person name="Shinn P."/>
            <person name="Ecker J.R."/>
        </authorList>
    </citation>
    <scope>NUCLEOTIDE SEQUENCE [LARGE SCALE MRNA]</scope>
    <source>
        <strain>cv. Columbia</strain>
    </source>
</reference>
<reference key="5">
    <citation type="submission" date="2002-03" db="EMBL/GenBank/DDBJ databases">
        <title>Full-length cDNA from Arabidopsis thaliana.</title>
        <authorList>
            <person name="Brover V.V."/>
            <person name="Troukhan M.E."/>
            <person name="Alexandrov N.A."/>
            <person name="Lu Y.-P."/>
            <person name="Flavell R.B."/>
            <person name="Feldmann K.A."/>
        </authorList>
    </citation>
    <scope>NUCLEOTIDE SEQUENCE [LARGE SCALE MRNA]</scope>
</reference>
<reference key="6">
    <citation type="journal article" date="2004" name="Plant J.">
        <title>Overexpression of a novel small peptide ROTUNDIFOLIA4 decreases cell proliferation and alters leaf shape in Arabidopsis thaliana.</title>
        <authorList>
            <person name="Narita N.N."/>
            <person name="Moore S."/>
            <person name="Horiguchi G."/>
            <person name="Kubo M."/>
            <person name="Demura T."/>
            <person name="Fukuda H."/>
            <person name="Goodrich J."/>
            <person name="Tsukaya H."/>
        </authorList>
    </citation>
    <scope>GENE FAMILY</scope>
    <source>
        <strain>cv. Columbia</strain>
        <strain>cv. Landsberg erecta</strain>
    </source>
</reference>
<reference key="7">
    <citation type="journal article" date="2015" name="J. Plant Res.">
        <title>Comparative analysis of the RTFL peptide family on the control of plant organogenesis.</title>
        <authorList>
            <person name="Guo P."/>
            <person name="Yoshimura A."/>
            <person name="Ishikawa N."/>
            <person name="Yamaguchi T."/>
            <person name="Guo Y."/>
            <person name="Tsukaya H."/>
        </authorList>
    </citation>
    <scope>REVIEW</scope>
    <scope>GENE FAMILY</scope>
    <scope>NOMENCLATURE</scope>
    <source>
        <strain>cv. Columbia</strain>
    </source>
</reference>
<evidence type="ECO:0000250" key="1">
    <source>
        <dbReference type="UniProtKB" id="Q6X5V0"/>
    </source>
</evidence>
<evidence type="ECO:0000250" key="2">
    <source>
        <dbReference type="UniProtKB" id="Q7XXN8"/>
    </source>
</evidence>
<evidence type="ECO:0000255" key="3"/>
<evidence type="ECO:0000256" key="4">
    <source>
        <dbReference type="SAM" id="MobiDB-lite"/>
    </source>
</evidence>
<evidence type="ECO:0000303" key="5">
    <source>
    </source>
</evidence>
<evidence type="ECO:0000303" key="6">
    <source>
    </source>
</evidence>
<evidence type="ECO:0000305" key="7"/>
<evidence type="ECO:0000312" key="8">
    <source>
        <dbReference type="Araport" id="AT5G59510"/>
    </source>
</evidence>
<evidence type="ECO:0000312" key="9">
    <source>
        <dbReference type="EMBL" id="AED97199.1"/>
    </source>
</evidence>
<keyword id="KW-1003">Cell membrane</keyword>
<keyword id="KW-0217">Developmental protein</keyword>
<keyword id="KW-0472">Membrane</keyword>
<keyword id="KW-1185">Reference proteome</keyword>
<keyword id="KW-0812">Transmembrane</keyword>
<keyword id="KW-1133">Transmembrane helix</keyword>
<comment type="function">
    <text evidence="1">Small polypeptide acting as a regulatory molecule which coordinates cellular responses required for differentiation, growth and development, probably by restricting polar cell proliferation in lateral organs and coordinating socket cell recruitment and differentiation at trichome sites.</text>
</comment>
<comment type="subcellular location">
    <subcellularLocation>
        <location evidence="2">Cell membrane</location>
        <topology evidence="3">Single-pass membrane protein</topology>
    </subcellularLocation>
</comment>
<comment type="similarity">
    <text evidence="7">Belongs to the DVL/RTFL small polypeptides family.</text>
</comment>
<feature type="chain" id="PRO_0000452786" description="Small polypeptide DEVIL 18">
    <location>
        <begin position="1"/>
        <end position="144"/>
    </location>
</feature>
<feature type="transmembrane region" description="Helical" evidence="3">
    <location>
        <begin position="42"/>
        <end position="58"/>
    </location>
</feature>
<feature type="region of interest" description="Disordered" evidence="4">
    <location>
        <begin position="30"/>
        <end position="89"/>
    </location>
</feature>
<feature type="region of interest" description="Required for DVL/RTFL small polypeptide activity" evidence="2">
    <location>
        <begin position="108"/>
        <end position="139"/>
    </location>
</feature>
<feature type="compositionally biased region" description="Low complexity" evidence="4">
    <location>
        <begin position="30"/>
        <end position="58"/>
    </location>
</feature>
<feature type="compositionally biased region" description="Polar residues" evidence="4">
    <location>
        <begin position="68"/>
        <end position="84"/>
    </location>
</feature>
<organism>
    <name type="scientific">Arabidopsis thaliana</name>
    <name type="common">Mouse-ear cress</name>
    <dbReference type="NCBI Taxonomy" id="3702"/>
    <lineage>
        <taxon>Eukaryota</taxon>
        <taxon>Viridiplantae</taxon>
        <taxon>Streptophyta</taxon>
        <taxon>Embryophyta</taxon>
        <taxon>Tracheophyta</taxon>
        <taxon>Spermatophyta</taxon>
        <taxon>Magnoliopsida</taxon>
        <taxon>eudicotyledons</taxon>
        <taxon>Gunneridae</taxon>
        <taxon>Pentapetalae</taxon>
        <taxon>rosids</taxon>
        <taxon>malvids</taxon>
        <taxon>Brassicales</taxon>
        <taxon>Brassicaceae</taxon>
        <taxon>Camelineae</taxon>
        <taxon>Arabidopsis</taxon>
    </lineage>
</organism>
<gene>
    <name evidence="5" type="primary">DVL18</name>
    <name evidence="6" type="synonym">RTFL5</name>
    <name evidence="8" type="ordered locus">At5g59510</name>
    <name evidence="9" type="ORF">F2O15.21</name>
</gene>